<keyword id="KW-1185">Reference proteome</keyword>
<proteinExistence type="inferred from homology"/>
<evidence type="ECO:0000305" key="1"/>
<reference key="1">
    <citation type="journal article" date="1997" name="J. Bacteriol.">
        <title>Complete genome sequence of Methanobacterium thermoautotrophicum deltaH: functional analysis and comparative genomics.</title>
        <authorList>
            <person name="Smith D.R."/>
            <person name="Doucette-Stamm L.A."/>
            <person name="Deloughery C."/>
            <person name="Lee H.-M."/>
            <person name="Dubois J."/>
            <person name="Aldredge T."/>
            <person name="Bashirzadeh R."/>
            <person name="Blakely D."/>
            <person name="Cook R."/>
            <person name="Gilbert K."/>
            <person name="Harrison D."/>
            <person name="Hoang L."/>
            <person name="Keagle P."/>
            <person name="Lumm W."/>
            <person name="Pothier B."/>
            <person name="Qiu D."/>
            <person name="Spadafora R."/>
            <person name="Vicare R."/>
            <person name="Wang Y."/>
            <person name="Wierzbowski J."/>
            <person name="Gibson R."/>
            <person name="Jiwani N."/>
            <person name="Caruso A."/>
            <person name="Bush D."/>
            <person name="Safer H."/>
            <person name="Patwell D."/>
            <person name="Prabhakar S."/>
            <person name="McDougall S."/>
            <person name="Shimer G."/>
            <person name="Goyal A."/>
            <person name="Pietrovski S."/>
            <person name="Church G.M."/>
            <person name="Daniels C.J."/>
            <person name="Mao J.-I."/>
            <person name="Rice P."/>
            <person name="Noelling J."/>
            <person name="Reeve J.N."/>
        </authorList>
    </citation>
    <scope>NUCLEOTIDE SEQUENCE [LARGE SCALE GENOMIC DNA]</scope>
    <source>
        <strain>ATCC 29096 / DSM 1053 / JCM 10044 / NBRC 100330 / Delta H</strain>
    </source>
</reference>
<accession>O27246</accession>
<name>Y1178_METTH</name>
<protein>
    <recommendedName>
        <fullName>UPF0251 protein MTH_1178</fullName>
    </recommendedName>
</protein>
<comment type="similarity">
    <text evidence="1">Belongs to the UPF0251 family.</text>
</comment>
<organism>
    <name type="scientific">Methanothermobacter thermautotrophicus (strain ATCC 29096 / DSM 1053 / JCM 10044 / NBRC 100330 / Delta H)</name>
    <name type="common">Methanobacterium thermoautotrophicum</name>
    <dbReference type="NCBI Taxonomy" id="187420"/>
    <lineage>
        <taxon>Archaea</taxon>
        <taxon>Methanobacteriati</taxon>
        <taxon>Methanobacteriota</taxon>
        <taxon>Methanomada group</taxon>
        <taxon>Methanobacteria</taxon>
        <taxon>Methanobacteriales</taxon>
        <taxon>Methanobacteriaceae</taxon>
        <taxon>Methanothermobacter</taxon>
    </lineage>
</organism>
<feature type="chain" id="PRO_0000147581" description="UPF0251 protein MTH_1178">
    <location>
        <begin position="1"/>
        <end position="189"/>
    </location>
</feature>
<gene>
    <name type="ordered locus">MTH_1178</name>
</gene>
<dbReference type="EMBL" id="AE000666">
    <property type="protein sequence ID" value="AAB85667.1"/>
    <property type="molecule type" value="Genomic_DNA"/>
</dbReference>
<dbReference type="PIR" id="A69024">
    <property type="entry name" value="A69024"/>
</dbReference>
<dbReference type="RefSeq" id="WP_010876802.1">
    <property type="nucleotide sequence ID" value="NC_000916.1"/>
</dbReference>
<dbReference type="STRING" id="187420.MTH_1178"/>
<dbReference type="PaxDb" id="187420-MTH_1178"/>
<dbReference type="EnsemblBacteria" id="AAB85667">
    <property type="protein sequence ID" value="AAB85667"/>
    <property type="gene ID" value="MTH_1178"/>
</dbReference>
<dbReference type="GeneID" id="1471586"/>
<dbReference type="KEGG" id="mth:MTH_1178"/>
<dbReference type="PATRIC" id="fig|187420.15.peg.1155"/>
<dbReference type="HOGENOM" id="CLU_094511_0_0_2"/>
<dbReference type="InParanoid" id="O27246"/>
<dbReference type="Proteomes" id="UP000005223">
    <property type="component" value="Chromosome"/>
</dbReference>
<dbReference type="Gene3D" id="1.10.10.10">
    <property type="entry name" value="Winged helix-like DNA-binding domain superfamily/Winged helix DNA-binding domain"/>
    <property type="match status" value="1"/>
</dbReference>
<dbReference type="HAMAP" id="MF_00674">
    <property type="entry name" value="UPF0251"/>
    <property type="match status" value="1"/>
</dbReference>
<dbReference type="InterPro" id="IPR013324">
    <property type="entry name" value="RNA_pol_sigma_r3/r4-like"/>
</dbReference>
<dbReference type="InterPro" id="IPR002852">
    <property type="entry name" value="UPF0251"/>
</dbReference>
<dbReference type="InterPro" id="IPR036388">
    <property type="entry name" value="WH-like_DNA-bd_sf"/>
</dbReference>
<dbReference type="PANTHER" id="PTHR37478">
    <property type="match status" value="1"/>
</dbReference>
<dbReference type="PANTHER" id="PTHR37478:SF2">
    <property type="entry name" value="UPF0251 PROTEIN TK0562"/>
    <property type="match status" value="1"/>
</dbReference>
<dbReference type="Pfam" id="PF02001">
    <property type="entry name" value="DUF134"/>
    <property type="match status" value="1"/>
</dbReference>
<dbReference type="SUPFAM" id="SSF88659">
    <property type="entry name" value="Sigma3 and sigma4 domains of RNA polymerase sigma factors"/>
    <property type="match status" value="1"/>
</dbReference>
<sequence length="189" mass="21050">MPRPRRFRRILGEPRVVTFSPEASDEETGVEITLDEFEAIRLRDYHDIKQKKAAEIMGISQPTFHRTLTSARGKIAAALVEGRPIILKGGDYITDRRRYKCMDCQFEWISPEKEYKKCPDCGSENINVVSAETIPRFGRGGYGRGFGAGRGAPRVCKCIECGYEAPKTPGVPCRTEKCPKCGAPMCGAD</sequence>